<evidence type="ECO:0000255" key="1">
    <source>
        <dbReference type="HAMAP-Rule" id="MF_01953"/>
    </source>
</evidence>
<name>URE1_BURCH</name>
<feature type="chain" id="PRO_1000073699" description="Urease subunit alpha">
    <location>
        <begin position="1"/>
        <end position="568"/>
    </location>
</feature>
<feature type="domain" description="Urease" evidence="1">
    <location>
        <begin position="130"/>
        <end position="568"/>
    </location>
</feature>
<feature type="active site" description="Proton donor" evidence="1">
    <location>
        <position position="321"/>
    </location>
</feature>
<feature type="binding site" evidence="1">
    <location>
        <position position="135"/>
    </location>
    <ligand>
        <name>Ni(2+)</name>
        <dbReference type="ChEBI" id="CHEBI:49786"/>
        <label>1</label>
    </ligand>
</feature>
<feature type="binding site" evidence="1">
    <location>
        <position position="137"/>
    </location>
    <ligand>
        <name>Ni(2+)</name>
        <dbReference type="ChEBI" id="CHEBI:49786"/>
        <label>1</label>
    </ligand>
</feature>
<feature type="binding site" description="via carbamate group" evidence="1">
    <location>
        <position position="218"/>
    </location>
    <ligand>
        <name>Ni(2+)</name>
        <dbReference type="ChEBI" id="CHEBI:49786"/>
        <label>1</label>
    </ligand>
</feature>
<feature type="binding site" description="via carbamate group" evidence="1">
    <location>
        <position position="218"/>
    </location>
    <ligand>
        <name>Ni(2+)</name>
        <dbReference type="ChEBI" id="CHEBI:49786"/>
        <label>2</label>
    </ligand>
</feature>
<feature type="binding site" evidence="1">
    <location>
        <position position="220"/>
    </location>
    <ligand>
        <name>substrate</name>
    </ligand>
</feature>
<feature type="binding site" evidence="1">
    <location>
        <position position="247"/>
    </location>
    <ligand>
        <name>Ni(2+)</name>
        <dbReference type="ChEBI" id="CHEBI:49786"/>
        <label>2</label>
    </ligand>
</feature>
<feature type="binding site" evidence="1">
    <location>
        <position position="273"/>
    </location>
    <ligand>
        <name>Ni(2+)</name>
        <dbReference type="ChEBI" id="CHEBI:49786"/>
        <label>2</label>
    </ligand>
</feature>
<feature type="binding site" evidence="1">
    <location>
        <position position="361"/>
    </location>
    <ligand>
        <name>Ni(2+)</name>
        <dbReference type="ChEBI" id="CHEBI:49786"/>
        <label>1</label>
    </ligand>
</feature>
<feature type="modified residue" description="N6-carboxylysine" evidence="1">
    <location>
        <position position="218"/>
    </location>
</feature>
<proteinExistence type="inferred from homology"/>
<comment type="catalytic activity">
    <reaction evidence="1">
        <text>urea + 2 H2O + H(+) = hydrogencarbonate + 2 NH4(+)</text>
        <dbReference type="Rhea" id="RHEA:20557"/>
        <dbReference type="ChEBI" id="CHEBI:15377"/>
        <dbReference type="ChEBI" id="CHEBI:15378"/>
        <dbReference type="ChEBI" id="CHEBI:16199"/>
        <dbReference type="ChEBI" id="CHEBI:17544"/>
        <dbReference type="ChEBI" id="CHEBI:28938"/>
        <dbReference type="EC" id="3.5.1.5"/>
    </reaction>
</comment>
<comment type="cofactor">
    <cofactor evidence="1">
        <name>Ni cation</name>
        <dbReference type="ChEBI" id="CHEBI:25516"/>
    </cofactor>
    <text evidence="1">Binds 2 nickel ions per subunit.</text>
</comment>
<comment type="pathway">
    <text evidence="1">Nitrogen metabolism; urea degradation; CO(2) and NH(3) from urea (urease route): step 1/1.</text>
</comment>
<comment type="subunit">
    <text evidence="1">Heterotrimer of UreA (gamma), UreB (beta) and UreC (alpha) subunits. Three heterotrimers associate to form the active enzyme.</text>
</comment>
<comment type="subcellular location">
    <subcellularLocation>
        <location evidence="1">Cytoplasm</location>
    </subcellularLocation>
</comment>
<comment type="PTM">
    <text evidence="1">Carboxylation allows a single lysine to coordinate two nickel ions.</text>
</comment>
<comment type="similarity">
    <text evidence="1">Belongs to the metallo-dependent hydrolases superfamily. Urease alpha subunit family.</text>
</comment>
<dbReference type="EC" id="3.5.1.5" evidence="1"/>
<dbReference type="EMBL" id="CP000458">
    <property type="protein sequence ID" value="ABK07653.1"/>
    <property type="molecule type" value="Genomic_DNA"/>
</dbReference>
<dbReference type="RefSeq" id="WP_006476701.1">
    <property type="nucleotide sequence ID" value="NC_008542.1"/>
</dbReference>
<dbReference type="SMR" id="A0K576"/>
<dbReference type="MEROPS" id="M38.982"/>
<dbReference type="GeneID" id="83047661"/>
<dbReference type="KEGG" id="bch:Bcen2424_0900"/>
<dbReference type="HOGENOM" id="CLU_000980_0_0_4"/>
<dbReference type="UniPathway" id="UPA00258">
    <property type="reaction ID" value="UER00370"/>
</dbReference>
<dbReference type="GO" id="GO:0005737">
    <property type="term" value="C:cytoplasm"/>
    <property type="evidence" value="ECO:0007669"/>
    <property type="project" value="UniProtKB-SubCell"/>
</dbReference>
<dbReference type="GO" id="GO:0016151">
    <property type="term" value="F:nickel cation binding"/>
    <property type="evidence" value="ECO:0007669"/>
    <property type="project" value="UniProtKB-UniRule"/>
</dbReference>
<dbReference type="GO" id="GO:0009039">
    <property type="term" value="F:urease activity"/>
    <property type="evidence" value="ECO:0007669"/>
    <property type="project" value="UniProtKB-UniRule"/>
</dbReference>
<dbReference type="GO" id="GO:0043419">
    <property type="term" value="P:urea catabolic process"/>
    <property type="evidence" value="ECO:0007669"/>
    <property type="project" value="UniProtKB-UniRule"/>
</dbReference>
<dbReference type="CDD" id="cd00375">
    <property type="entry name" value="Urease_alpha"/>
    <property type="match status" value="1"/>
</dbReference>
<dbReference type="Gene3D" id="3.20.20.140">
    <property type="entry name" value="Metal-dependent hydrolases"/>
    <property type="match status" value="1"/>
</dbReference>
<dbReference type="Gene3D" id="2.30.40.10">
    <property type="entry name" value="Urease, subunit C, domain 1"/>
    <property type="match status" value="1"/>
</dbReference>
<dbReference type="HAMAP" id="MF_01953">
    <property type="entry name" value="Urease_alpha"/>
    <property type="match status" value="1"/>
</dbReference>
<dbReference type="InterPro" id="IPR006680">
    <property type="entry name" value="Amidohydro-rel"/>
</dbReference>
<dbReference type="InterPro" id="IPR011059">
    <property type="entry name" value="Metal-dep_hydrolase_composite"/>
</dbReference>
<dbReference type="InterPro" id="IPR032466">
    <property type="entry name" value="Metal_Hydrolase"/>
</dbReference>
<dbReference type="InterPro" id="IPR011612">
    <property type="entry name" value="Urease_alpha_N_dom"/>
</dbReference>
<dbReference type="InterPro" id="IPR050112">
    <property type="entry name" value="Urease_alpha_subunit"/>
</dbReference>
<dbReference type="InterPro" id="IPR017950">
    <property type="entry name" value="Urease_AS"/>
</dbReference>
<dbReference type="InterPro" id="IPR005848">
    <property type="entry name" value="Urease_asu"/>
</dbReference>
<dbReference type="InterPro" id="IPR017951">
    <property type="entry name" value="Urease_asu_c"/>
</dbReference>
<dbReference type="InterPro" id="IPR029754">
    <property type="entry name" value="Urease_Ni-bd"/>
</dbReference>
<dbReference type="NCBIfam" id="NF009685">
    <property type="entry name" value="PRK13206.1"/>
    <property type="match status" value="1"/>
</dbReference>
<dbReference type="NCBIfam" id="NF009686">
    <property type="entry name" value="PRK13207.1"/>
    <property type="match status" value="1"/>
</dbReference>
<dbReference type="NCBIfam" id="TIGR01792">
    <property type="entry name" value="urease_alph"/>
    <property type="match status" value="1"/>
</dbReference>
<dbReference type="PANTHER" id="PTHR43440">
    <property type="entry name" value="UREASE"/>
    <property type="match status" value="1"/>
</dbReference>
<dbReference type="PANTHER" id="PTHR43440:SF1">
    <property type="entry name" value="UREASE"/>
    <property type="match status" value="1"/>
</dbReference>
<dbReference type="Pfam" id="PF01979">
    <property type="entry name" value="Amidohydro_1"/>
    <property type="match status" value="1"/>
</dbReference>
<dbReference type="Pfam" id="PF00449">
    <property type="entry name" value="Urease_alpha"/>
    <property type="match status" value="1"/>
</dbReference>
<dbReference type="PRINTS" id="PR01752">
    <property type="entry name" value="UREASE"/>
</dbReference>
<dbReference type="SUPFAM" id="SSF51338">
    <property type="entry name" value="Composite domain of metallo-dependent hydrolases"/>
    <property type="match status" value="2"/>
</dbReference>
<dbReference type="SUPFAM" id="SSF51556">
    <property type="entry name" value="Metallo-dependent hydrolases"/>
    <property type="match status" value="1"/>
</dbReference>
<dbReference type="PROSITE" id="PS01120">
    <property type="entry name" value="UREASE_1"/>
    <property type="match status" value="1"/>
</dbReference>
<dbReference type="PROSITE" id="PS00145">
    <property type="entry name" value="UREASE_2"/>
    <property type="match status" value="1"/>
</dbReference>
<dbReference type="PROSITE" id="PS51368">
    <property type="entry name" value="UREASE_3"/>
    <property type="match status" value="1"/>
</dbReference>
<keyword id="KW-0963">Cytoplasm</keyword>
<keyword id="KW-0378">Hydrolase</keyword>
<keyword id="KW-0479">Metal-binding</keyword>
<keyword id="KW-0533">Nickel</keyword>
<gene>
    <name evidence="1" type="primary">ureC</name>
    <name type="ordered locus">Bcen2424_0900</name>
</gene>
<sequence length="568" mass="60957">MTLRLSRRAYAEMFGPTTGDRVRLADTELLIEIERDFTTYGEEVKFGGGKVIRDGMGQSQRVAADVPDTVITNAVILDHWGIVKADIAIKHGRIAAIGKAGNPDIQPGVTIAIGAATEVIAGEGLIVTAGGIDTHIHFISPQQIDEALASGVTTMLGGGTGPATGTNATTCTPGPWHMERMLQAADGWPINLGFLGKGNASLPQPLVEQIAAGAIGLKLHEDWGTTPAAIDNCLSVADDTDTQVAIHTDTLNEAGFVESTVAAFKGRTIHTYHTEGAGGGHAPDILKVCGEMNVLPSSTNPTRPYTINTLDEHLDMLMVCHHLDPSIAEDLAFAESRIRRETIAAEDILHDLGALSMLSSDSQAMGRVGEVIIRTWQTAHKMKVQRGALPEDTARNDNFRAKRYVAKYTINPALTHGIAHEVGSIEPGKWADLVLWEPAFFGIKPSMILKGGMIAVAQMGDPNASIPTPQPVHYREMFATRGGALARTSLTFVSQMAADAGIAERYGLAKRIVPVRNCRNVTKADMIHNAWRPSISVDPETYDVIADGQLLTCEPATVLPMAQRYFLF</sequence>
<protein>
    <recommendedName>
        <fullName evidence="1">Urease subunit alpha</fullName>
        <ecNumber evidence="1">3.5.1.5</ecNumber>
    </recommendedName>
    <alternativeName>
        <fullName evidence="1">Urea amidohydrolase subunit alpha</fullName>
    </alternativeName>
</protein>
<organism>
    <name type="scientific">Burkholderia cenocepacia (strain HI2424)</name>
    <dbReference type="NCBI Taxonomy" id="331272"/>
    <lineage>
        <taxon>Bacteria</taxon>
        <taxon>Pseudomonadati</taxon>
        <taxon>Pseudomonadota</taxon>
        <taxon>Betaproteobacteria</taxon>
        <taxon>Burkholderiales</taxon>
        <taxon>Burkholderiaceae</taxon>
        <taxon>Burkholderia</taxon>
        <taxon>Burkholderia cepacia complex</taxon>
    </lineage>
</organism>
<reference key="1">
    <citation type="submission" date="2006-08" db="EMBL/GenBank/DDBJ databases">
        <title>Complete sequence of chromosome 1 of Burkholderia cenocepacia HI2424.</title>
        <authorList>
            <person name="Copeland A."/>
            <person name="Lucas S."/>
            <person name="Lapidus A."/>
            <person name="Barry K."/>
            <person name="Detter J.C."/>
            <person name="Glavina del Rio T."/>
            <person name="Hammon N."/>
            <person name="Israni S."/>
            <person name="Pitluck S."/>
            <person name="Chain P."/>
            <person name="Malfatti S."/>
            <person name="Shin M."/>
            <person name="Vergez L."/>
            <person name="Schmutz J."/>
            <person name="Larimer F."/>
            <person name="Land M."/>
            <person name="Hauser L."/>
            <person name="Kyrpides N."/>
            <person name="Kim E."/>
            <person name="LiPuma J.J."/>
            <person name="Gonzalez C.F."/>
            <person name="Konstantinidis K."/>
            <person name="Tiedje J.M."/>
            <person name="Richardson P."/>
        </authorList>
    </citation>
    <scope>NUCLEOTIDE SEQUENCE [LARGE SCALE GENOMIC DNA]</scope>
    <source>
        <strain>HI2424</strain>
    </source>
</reference>
<accession>A0K576</accession>